<comment type="function">
    <text evidence="1">This protein binds to 23S rRNA in the presence of protein L20.</text>
</comment>
<comment type="subunit">
    <text evidence="1">Part of the 50S ribosomal subunit. Contacts protein L20.</text>
</comment>
<comment type="similarity">
    <text evidence="1">Belongs to the bacterial ribosomal protein bL21 family.</text>
</comment>
<evidence type="ECO:0000255" key="1">
    <source>
        <dbReference type="HAMAP-Rule" id="MF_01363"/>
    </source>
</evidence>
<evidence type="ECO:0000305" key="2"/>
<protein>
    <recommendedName>
        <fullName evidence="1">Large ribosomal subunit protein bL21</fullName>
    </recommendedName>
    <alternativeName>
        <fullName evidence="2">50S ribosomal protein L21</fullName>
    </alternativeName>
</protein>
<reference key="1">
    <citation type="journal article" date="2001" name="Science">
        <title>Comparative genomics of Listeria species.</title>
        <authorList>
            <person name="Glaser P."/>
            <person name="Frangeul L."/>
            <person name="Buchrieser C."/>
            <person name="Rusniok C."/>
            <person name="Amend A."/>
            <person name="Baquero F."/>
            <person name="Berche P."/>
            <person name="Bloecker H."/>
            <person name="Brandt P."/>
            <person name="Chakraborty T."/>
            <person name="Charbit A."/>
            <person name="Chetouani F."/>
            <person name="Couve E."/>
            <person name="de Daruvar A."/>
            <person name="Dehoux P."/>
            <person name="Domann E."/>
            <person name="Dominguez-Bernal G."/>
            <person name="Duchaud E."/>
            <person name="Durant L."/>
            <person name="Dussurget O."/>
            <person name="Entian K.-D."/>
            <person name="Fsihi H."/>
            <person name="Garcia-del Portillo F."/>
            <person name="Garrido P."/>
            <person name="Gautier L."/>
            <person name="Goebel W."/>
            <person name="Gomez-Lopez N."/>
            <person name="Hain T."/>
            <person name="Hauf J."/>
            <person name="Jackson D."/>
            <person name="Jones L.-M."/>
            <person name="Kaerst U."/>
            <person name="Kreft J."/>
            <person name="Kuhn M."/>
            <person name="Kunst F."/>
            <person name="Kurapkat G."/>
            <person name="Madueno E."/>
            <person name="Maitournam A."/>
            <person name="Mata Vicente J."/>
            <person name="Ng E."/>
            <person name="Nedjari H."/>
            <person name="Nordsiek G."/>
            <person name="Novella S."/>
            <person name="de Pablos B."/>
            <person name="Perez-Diaz J.-C."/>
            <person name="Purcell R."/>
            <person name="Remmel B."/>
            <person name="Rose M."/>
            <person name="Schlueter T."/>
            <person name="Simoes N."/>
            <person name="Tierrez A."/>
            <person name="Vazquez-Boland J.-A."/>
            <person name="Voss H."/>
            <person name="Wehland J."/>
            <person name="Cossart P."/>
        </authorList>
    </citation>
    <scope>NUCLEOTIDE SEQUENCE [LARGE SCALE GENOMIC DNA]</scope>
    <source>
        <strain>ATCC BAA-680 / CLIP 11262</strain>
    </source>
</reference>
<name>RL21_LISIN</name>
<accession>Q92BH2</accession>
<dbReference type="EMBL" id="AL596169">
    <property type="protein sequence ID" value="CAC96808.1"/>
    <property type="molecule type" value="Genomic_DNA"/>
</dbReference>
<dbReference type="PIR" id="AH1629">
    <property type="entry name" value="AH1629"/>
</dbReference>
<dbReference type="RefSeq" id="WP_003719835.1">
    <property type="nucleotide sequence ID" value="NC_003212.1"/>
</dbReference>
<dbReference type="SMR" id="Q92BH2"/>
<dbReference type="STRING" id="272626.gene:17565908"/>
<dbReference type="GeneID" id="93234959"/>
<dbReference type="KEGG" id="lin:rplU"/>
<dbReference type="eggNOG" id="COG0261">
    <property type="taxonomic scope" value="Bacteria"/>
</dbReference>
<dbReference type="HOGENOM" id="CLU_061463_3_2_9"/>
<dbReference type="OrthoDB" id="9813334at2"/>
<dbReference type="Proteomes" id="UP000002513">
    <property type="component" value="Chromosome"/>
</dbReference>
<dbReference type="GO" id="GO:0005737">
    <property type="term" value="C:cytoplasm"/>
    <property type="evidence" value="ECO:0007669"/>
    <property type="project" value="UniProtKB-ARBA"/>
</dbReference>
<dbReference type="GO" id="GO:1990904">
    <property type="term" value="C:ribonucleoprotein complex"/>
    <property type="evidence" value="ECO:0007669"/>
    <property type="project" value="UniProtKB-KW"/>
</dbReference>
<dbReference type="GO" id="GO:0005840">
    <property type="term" value="C:ribosome"/>
    <property type="evidence" value="ECO:0007669"/>
    <property type="project" value="UniProtKB-KW"/>
</dbReference>
<dbReference type="GO" id="GO:0019843">
    <property type="term" value="F:rRNA binding"/>
    <property type="evidence" value="ECO:0007669"/>
    <property type="project" value="UniProtKB-UniRule"/>
</dbReference>
<dbReference type="GO" id="GO:0003735">
    <property type="term" value="F:structural constituent of ribosome"/>
    <property type="evidence" value="ECO:0007669"/>
    <property type="project" value="InterPro"/>
</dbReference>
<dbReference type="GO" id="GO:0006412">
    <property type="term" value="P:translation"/>
    <property type="evidence" value="ECO:0007669"/>
    <property type="project" value="UniProtKB-UniRule"/>
</dbReference>
<dbReference type="HAMAP" id="MF_01363">
    <property type="entry name" value="Ribosomal_bL21"/>
    <property type="match status" value="1"/>
</dbReference>
<dbReference type="InterPro" id="IPR028909">
    <property type="entry name" value="bL21-like"/>
</dbReference>
<dbReference type="InterPro" id="IPR036164">
    <property type="entry name" value="bL21-like_sf"/>
</dbReference>
<dbReference type="InterPro" id="IPR001787">
    <property type="entry name" value="Ribosomal_bL21"/>
</dbReference>
<dbReference type="InterPro" id="IPR018258">
    <property type="entry name" value="Ribosomal_bL21_CS"/>
</dbReference>
<dbReference type="NCBIfam" id="TIGR00061">
    <property type="entry name" value="L21"/>
    <property type="match status" value="1"/>
</dbReference>
<dbReference type="PANTHER" id="PTHR21349">
    <property type="entry name" value="50S RIBOSOMAL PROTEIN L21"/>
    <property type="match status" value="1"/>
</dbReference>
<dbReference type="PANTHER" id="PTHR21349:SF0">
    <property type="entry name" value="LARGE RIBOSOMAL SUBUNIT PROTEIN BL21M"/>
    <property type="match status" value="1"/>
</dbReference>
<dbReference type="Pfam" id="PF00829">
    <property type="entry name" value="Ribosomal_L21p"/>
    <property type="match status" value="1"/>
</dbReference>
<dbReference type="SUPFAM" id="SSF141091">
    <property type="entry name" value="L21p-like"/>
    <property type="match status" value="1"/>
</dbReference>
<dbReference type="PROSITE" id="PS01169">
    <property type="entry name" value="RIBOSOMAL_L21"/>
    <property type="match status" value="1"/>
</dbReference>
<proteinExistence type="inferred from homology"/>
<gene>
    <name evidence="1" type="primary">rplU</name>
    <name type="ordered locus">lin1577</name>
</gene>
<keyword id="KW-0687">Ribonucleoprotein</keyword>
<keyword id="KW-0689">Ribosomal protein</keyword>
<keyword id="KW-0694">RNA-binding</keyword>
<keyword id="KW-0699">rRNA-binding</keyword>
<feature type="chain" id="PRO_0000269337" description="Large ribosomal subunit protein bL21">
    <location>
        <begin position="1"/>
        <end position="102"/>
    </location>
</feature>
<sequence length="102" mass="11200">MYAIIETGGKQIKVEAGQEIYVEKLAGEVGDVVTFDKVLFVGGDSAKVGVPFVDGATVTAKVEKQGRAKKLTVYKYKPKKNYHKKQGHRQPYTKLTIDAINA</sequence>
<organism>
    <name type="scientific">Listeria innocua serovar 6a (strain ATCC BAA-680 / CLIP 11262)</name>
    <dbReference type="NCBI Taxonomy" id="272626"/>
    <lineage>
        <taxon>Bacteria</taxon>
        <taxon>Bacillati</taxon>
        <taxon>Bacillota</taxon>
        <taxon>Bacilli</taxon>
        <taxon>Bacillales</taxon>
        <taxon>Listeriaceae</taxon>
        <taxon>Listeria</taxon>
    </lineage>
</organism>